<accession>O80840</accession>
<accession>Q1W379</accession>
<name>PMM_ARATH</name>
<reference key="1">
    <citation type="journal article" date="2007" name="Plant J.">
        <title>Molecular and functional analysis of phosphomannomutase (PMM) from higher plants and genetic evidence for the involvement of PMM in ascorbic acid biosynthesis in Arabidopsis and Nicotiana benthamiana.</title>
        <authorList>
            <person name="Qian W."/>
            <person name="Yu C."/>
            <person name="Qin H."/>
            <person name="Liu X."/>
            <person name="Zhang A."/>
            <person name="Johansen I.E."/>
            <person name="Wang D."/>
        </authorList>
    </citation>
    <scope>NUCLEOTIDE SEQUENCE [MRNA]</scope>
    <scope>IDENTIFICATION BY MASS SPECTROMETRY</scope>
    <scope>FUNCTION</scope>
    <scope>CATALYTIC ACTIVITY</scope>
    <scope>BIOPHYSICOCHEMICAL PROPERTIES</scope>
    <scope>TISSUE SPECIFICITY</scope>
</reference>
<reference key="2">
    <citation type="journal article" date="1999" name="Nature">
        <title>Sequence and analysis of chromosome 2 of the plant Arabidopsis thaliana.</title>
        <authorList>
            <person name="Lin X."/>
            <person name="Kaul S."/>
            <person name="Rounsley S.D."/>
            <person name="Shea T.P."/>
            <person name="Benito M.-I."/>
            <person name="Town C.D."/>
            <person name="Fujii C.Y."/>
            <person name="Mason T.M."/>
            <person name="Bowman C.L."/>
            <person name="Barnstead M.E."/>
            <person name="Feldblyum T.V."/>
            <person name="Buell C.R."/>
            <person name="Ketchum K.A."/>
            <person name="Lee J.J."/>
            <person name="Ronning C.M."/>
            <person name="Koo H.L."/>
            <person name="Moffat K.S."/>
            <person name="Cronin L.A."/>
            <person name="Shen M."/>
            <person name="Pai G."/>
            <person name="Van Aken S."/>
            <person name="Umayam L."/>
            <person name="Tallon L.J."/>
            <person name="Gill J.E."/>
            <person name="Adams M.D."/>
            <person name="Carrera A.J."/>
            <person name="Creasy T.H."/>
            <person name="Goodman H.M."/>
            <person name="Somerville C.R."/>
            <person name="Copenhaver G.P."/>
            <person name="Preuss D."/>
            <person name="Nierman W.C."/>
            <person name="White O."/>
            <person name="Eisen J.A."/>
            <person name="Salzberg S.L."/>
            <person name="Fraser C.M."/>
            <person name="Venter J.C."/>
        </authorList>
    </citation>
    <scope>NUCLEOTIDE SEQUENCE [LARGE SCALE GENOMIC DNA]</scope>
    <source>
        <strain>cv. Columbia</strain>
    </source>
</reference>
<reference key="3">
    <citation type="journal article" date="2017" name="Plant J.">
        <title>Araport11: a complete reannotation of the Arabidopsis thaliana reference genome.</title>
        <authorList>
            <person name="Cheng C.Y."/>
            <person name="Krishnakumar V."/>
            <person name="Chan A.P."/>
            <person name="Thibaud-Nissen F."/>
            <person name="Schobel S."/>
            <person name="Town C.D."/>
        </authorList>
    </citation>
    <scope>GENOME REANNOTATION</scope>
    <source>
        <strain>cv. Columbia</strain>
    </source>
</reference>
<reference key="4">
    <citation type="journal article" date="2003" name="Science">
        <title>Empirical analysis of transcriptional activity in the Arabidopsis genome.</title>
        <authorList>
            <person name="Yamada K."/>
            <person name="Lim J."/>
            <person name="Dale J.M."/>
            <person name="Chen H."/>
            <person name="Shinn P."/>
            <person name="Palm C.J."/>
            <person name="Southwick A.M."/>
            <person name="Wu H.C."/>
            <person name="Kim C.J."/>
            <person name="Nguyen M."/>
            <person name="Pham P.K."/>
            <person name="Cheuk R.F."/>
            <person name="Karlin-Newmann G."/>
            <person name="Liu S.X."/>
            <person name="Lam B."/>
            <person name="Sakano H."/>
            <person name="Wu T."/>
            <person name="Yu G."/>
            <person name="Miranda M."/>
            <person name="Quach H.L."/>
            <person name="Tripp M."/>
            <person name="Chang C.H."/>
            <person name="Lee J.M."/>
            <person name="Toriumi M.J."/>
            <person name="Chan M.M."/>
            <person name="Tang C.C."/>
            <person name="Onodera C.S."/>
            <person name="Deng J.M."/>
            <person name="Akiyama K."/>
            <person name="Ansari Y."/>
            <person name="Arakawa T."/>
            <person name="Banh J."/>
            <person name="Banno F."/>
            <person name="Bowser L."/>
            <person name="Brooks S.Y."/>
            <person name="Carninci P."/>
            <person name="Chao Q."/>
            <person name="Choy N."/>
            <person name="Enju A."/>
            <person name="Goldsmith A.D."/>
            <person name="Gurjal M."/>
            <person name="Hansen N.F."/>
            <person name="Hayashizaki Y."/>
            <person name="Johnson-Hopson C."/>
            <person name="Hsuan V.W."/>
            <person name="Iida K."/>
            <person name="Karnes M."/>
            <person name="Khan S."/>
            <person name="Koesema E."/>
            <person name="Ishida J."/>
            <person name="Jiang P.X."/>
            <person name="Jones T."/>
            <person name="Kawai J."/>
            <person name="Kamiya A."/>
            <person name="Meyers C."/>
            <person name="Nakajima M."/>
            <person name="Narusaka M."/>
            <person name="Seki M."/>
            <person name="Sakurai T."/>
            <person name="Satou M."/>
            <person name="Tamse R."/>
            <person name="Vaysberg M."/>
            <person name="Wallender E.K."/>
            <person name="Wong C."/>
            <person name="Yamamura Y."/>
            <person name="Yuan S."/>
            <person name="Shinozaki K."/>
            <person name="Davis R.W."/>
            <person name="Theologis A."/>
            <person name="Ecker J.R."/>
        </authorList>
    </citation>
    <scope>NUCLEOTIDE SEQUENCE [LARGE SCALE MRNA]</scope>
    <source>
        <strain>cv. Columbia</strain>
    </source>
</reference>
<reference key="5">
    <citation type="submission" date="2002-03" db="EMBL/GenBank/DDBJ databases">
        <title>Full-length cDNA from Arabidopsis thaliana.</title>
        <authorList>
            <person name="Brover V.V."/>
            <person name="Troukhan M.E."/>
            <person name="Alexandrov N.A."/>
            <person name="Lu Y.-P."/>
            <person name="Flavell R.B."/>
            <person name="Feldmann K.A."/>
        </authorList>
    </citation>
    <scope>NUCLEOTIDE SEQUENCE [LARGE SCALE MRNA]</scope>
</reference>
<reference key="6">
    <citation type="journal article" date="2008" name="J. Biol. Chem.">
        <title>A temperature-sensitive mutation in the Arabidopsis thaliana phosphomannomutase gene disrupts protein glycosylation and triggers cell death.</title>
        <authorList>
            <person name="Hoeberichts F.A."/>
            <person name="Vaeck E."/>
            <person name="Kiddle G."/>
            <person name="Coppens E."/>
            <person name="van de Cotte B."/>
            <person name="Adamantidis A."/>
            <person name="Ormenese S."/>
            <person name="Foyer C.H."/>
            <person name="Zabeau M."/>
            <person name="Inze D."/>
            <person name="Perilleux C."/>
            <person name="Van Breusegem F."/>
            <person name="Vuylsteke M."/>
        </authorList>
    </citation>
    <scope>FUNCTION</scope>
    <scope>MUTAGENESIS OF GLY-7 AND ARG-37</scope>
    <scope>DISRUPTION PHENOTYPE</scope>
</reference>
<evidence type="ECO:0000250" key="1">
    <source>
        <dbReference type="UniProtKB" id="A0A0U1WZ18"/>
    </source>
</evidence>
<evidence type="ECO:0000250" key="2">
    <source>
        <dbReference type="UniProtKB" id="P31353"/>
    </source>
</evidence>
<evidence type="ECO:0000250" key="3">
    <source>
        <dbReference type="UniProtKB" id="Q92871"/>
    </source>
</evidence>
<evidence type="ECO:0000269" key="4">
    <source>
    </source>
</evidence>
<evidence type="ECO:0000269" key="5">
    <source>
    </source>
</evidence>
<evidence type="ECO:0000303" key="6">
    <source>
    </source>
</evidence>
<evidence type="ECO:0000305" key="7"/>
<evidence type="ECO:0000312" key="8">
    <source>
        <dbReference type="Araport" id="AT2G45790"/>
    </source>
</evidence>
<evidence type="ECO:0000312" key="9">
    <source>
        <dbReference type="EMBL" id="AAC28545.1"/>
    </source>
</evidence>
<gene>
    <name evidence="6" type="primary">PMM</name>
    <name evidence="8" type="ordered locus">At2g45790</name>
    <name evidence="9" type="ORF">F4I18.23</name>
</gene>
<protein>
    <recommendedName>
        <fullName evidence="6">Phosphomannomutase</fullName>
        <shortName evidence="6">AtPMM</shortName>
        <ecNumber evidence="4">5.4.2.8</ecNumber>
    </recommendedName>
</protein>
<proteinExistence type="evidence at protein level"/>
<dbReference type="EC" id="5.4.2.8" evidence="4"/>
<dbReference type="EMBL" id="DQ442991">
    <property type="protein sequence ID" value="ABD97870.1"/>
    <property type="molecule type" value="mRNA"/>
</dbReference>
<dbReference type="EMBL" id="AC004665">
    <property type="protein sequence ID" value="AAC28545.1"/>
    <property type="molecule type" value="Genomic_DNA"/>
</dbReference>
<dbReference type="EMBL" id="CP002685">
    <property type="protein sequence ID" value="AEC10601.1"/>
    <property type="molecule type" value="Genomic_DNA"/>
</dbReference>
<dbReference type="EMBL" id="AY050806">
    <property type="protein sequence ID" value="AAK92741.1"/>
    <property type="molecule type" value="mRNA"/>
</dbReference>
<dbReference type="EMBL" id="AY113964">
    <property type="protein sequence ID" value="AAM45012.1"/>
    <property type="molecule type" value="mRNA"/>
</dbReference>
<dbReference type="EMBL" id="AY088930">
    <property type="protein sequence ID" value="AAM67236.1"/>
    <property type="molecule type" value="mRNA"/>
</dbReference>
<dbReference type="PIR" id="T02468">
    <property type="entry name" value="T02468"/>
</dbReference>
<dbReference type="RefSeq" id="NP_182103.1">
    <property type="nucleotide sequence ID" value="NM_130142.4"/>
</dbReference>
<dbReference type="SMR" id="O80840"/>
<dbReference type="BioGRID" id="4523">
    <property type="interactions" value="3"/>
</dbReference>
<dbReference type="FunCoup" id="O80840">
    <property type="interactions" value="3912"/>
</dbReference>
<dbReference type="IntAct" id="O80840">
    <property type="interactions" value="1"/>
</dbReference>
<dbReference type="STRING" id="3702.O80840"/>
<dbReference type="iPTMnet" id="O80840"/>
<dbReference type="PaxDb" id="3702-AT2G45790.1"/>
<dbReference type="ProteomicsDB" id="226150"/>
<dbReference type="DNASU" id="819187"/>
<dbReference type="EnsemblPlants" id="AT2G45790.1">
    <property type="protein sequence ID" value="AT2G45790.1"/>
    <property type="gene ID" value="AT2G45790"/>
</dbReference>
<dbReference type="GeneID" id="819187"/>
<dbReference type="Gramene" id="AT2G45790.1">
    <property type="protein sequence ID" value="AT2G45790.1"/>
    <property type="gene ID" value="AT2G45790"/>
</dbReference>
<dbReference type="KEGG" id="ath:AT2G45790"/>
<dbReference type="Araport" id="AT2G45790"/>
<dbReference type="TAIR" id="AT2G45790">
    <property type="gene designation" value="PMM"/>
</dbReference>
<dbReference type="eggNOG" id="KOG3189">
    <property type="taxonomic scope" value="Eukaryota"/>
</dbReference>
<dbReference type="HOGENOM" id="CLU_065642_0_1_1"/>
<dbReference type="InParanoid" id="O80840"/>
<dbReference type="OMA" id="ISHRVYT"/>
<dbReference type="OrthoDB" id="10264771at2759"/>
<dbReference type="PhylomeDB" id="O80840"/>
<dbReference type="BioCyc" id="ARA:AT2G45790-MONOMER"/>
<dbReference type="BioCyc" id="MetaCyc:AT2G45790-MONOMER"/>
<dbReference type="BRENDA" id="5.4.2.8">
    <property type="organism ID" value="399"/>
</dbReference>
<dbReference type="UniPathway" id="UPA00126">
    <property type="reaction ID" value="UER00424"/>
</dbReference>
<dbReference type="PRO" id="PR:O80840"/>
<dbReference type="Proteomes" id="UP000006548">
    <property type="component" value="Chromosome 2"/>
</dbReference>
<dbReference type="ExpressionAtlas" id="O80840">
    <property type="expression patterns" value="baseline and differential"/>
</dbReference>
<dbReference type="GO" id="GO:0005829">
    <property type="term" value="C:cytosol"/>
    <property type="evidence" value="ECO:0007005"/>
    <property type="project" value="TAIR"/>
</dbReference>
<dbReference type="GO" id="GO:0046872">
    <property type="term" value="F:metal ion binding"/>
    <property type="evidence" value="ECO:0007669"/>
    <property type="project" value="UniProtKB-KW"/>
</dbReference>
<dbReference type="GO" id="GO:0004615">
    <property type="term" value="F:phosphomannomutase activity"/>
    <property type="evidence" value="ECO:0000314"/>
    <property type="project" value="TAIR"/>
</dbReference>
<dbReference type="GO" id="GO:0009298">
    <property type="term" value="P:GDP-mannose biosynthetic process"/>
    <property type="evidence" value="ECO:0007669"/>
    <property type="project" value="UniProtKB-UniPathway"/>
</dbReference>
<dbReference type="GO" id="GO:0019853">
    <property type="term" value="P:L-ascorbic acid biosynthetic process"/>
    <property type="evidence" value="ECO:0000315"/>
    <property type="project" value="TAIR"/>
</dbReference>
<dbReference type="CDD" id="cd02585">
    <property type="entry name" value="HAD_PMM"/>
    <property type="match status" value="1"/>
</dbReference>
<dbReference type="FunFam" id="3.30.1240.20:FF:000001">
    <property type="entry name" value="Phosphomannomutase"/>
    <property type="match status" value="1"/>
</dbReference>
<dbReference type="Gene3D" id="3.30.1240.20">
    <property type="match status" value="1"/>
</dbReference>
<dbReference type="Gene3D" id="3.40.50.1000">
    <property type="entry name" value="HAD superfamily/HAD-like"/>
    <property type="match status" value="1"/>
</dbReference>
<dbReference type="InterPro" id="IPR036412">
    <property type="entry name" value="HAD-like_sf"/>
</dbReference>
<dbReference type="InterPro" id="IPR006379">
    <property type="entry name" value="HAD-SF_hydro_IIB"/>
</dbReference>
<dbReference type="InterPro" id="IPR023214">
    <property type="entry name" value="HAD_sf"/>
</dbReference>
<dbReference type="InterPro" id="IPR005002">
    <property type="entry name" value="PMM"/>
</dbReference>
<dbReference type="InterPro" id="IPR043169">
    <property type="entry name" value="PMM_cap"/>
</dbReference>
<dbReference type="NCBIfam" id="TIGR01484">
    <property type="entry name" value="HAD-SF-IIB"/>
    <property type="match status" value="1"/>
</dbReference>
<dbReference type="PANTHER" id="PTHR10466">
    <property type="entry name" value="PHOSPHOMANNOMUTASE"/>
    <property type="match status" value="1"/>
</dbReference>
<dbReference type="PANTHER" id="PTHR10466:SF0">
    <property type="entry name" value="PHOSPHOMANNOMUTASE"/>
    <property type="match status" value="1"/>
</dbReference>
<dbReference type="Pfam" id="PF03332">
    <property type="entry name" value="PMM"/>
    <property type="match status" value="1"/>
</dbReference>
<dbReference type="SFLD" id="SFLDF00445">
    <property type="entry name" value="alpha-phosphomannomutase"/>
    <property type="match status" value="1"/>
</dbReference>
<dbReference type="SFLD" id="SFLDG01140">
    <property type="entry name" value="C2.B:_Phosphomannomutase_and_P"/>
    <property type="match status" value="1"/>
</dbReference>
<dbReference type="SUPFAM" id="SSF56784">
    <property type="entry name" value="HAD-like"/>
    <property type="match status" value="1"/>
</dbReference>
<comment type="function">
    <text evidence="4 5 7">Catalyzes the interconversion of mannose-6-phosphate to mannose-1-phosphate, the precursor for the synthesis of GDP-mannose (PubMed:17217471, PubMed:18086684). GDP-mannose is an essential sugar nucleotide for the synthesis of D-mannose-containing cell wall polysaccharides (galactomannans and glucomannans), glycolipids, glycoproteins and the antioxidant L-ascorbate (Probable). Can complement the yeast temperature-sensitive mutant sec53-6 (PubMed:17217471).</text>
</comment>
<comment type="catalytic activity">
    <reaction evidence="4">
        <text>alpha-D-mannose 1-phosphate = D-mannose 6-phosphate</text>
        <dbReference type="Rhea" id="RHEA:11140"/>
        <dbReference type="ChEBI" id="CHEBI:58409"/>
        <dbReference type="ChEBI" id="CHEBI:58735"/>
        <dbReference type="EC" id="5.4.2.8"/>
    </reaction>
</comment>
<comment type="cofactor">
    <cofactor evidence="3">
        <name>Mg(2+)</name>
        <dbReference type="ChEBI" id="CHEBI:18420"/>
    </cofactor>
</comment>
<comment type="biophysicochemical properties">
    <kinetics>
        <KM evidence="4">29.7 uM for mannose-1-phosphate</KM>
        <KM evidence="4">65.4 uM for glucose-1-phosphate</KM>
        <Vmax evidence="4">14.4 umol/min/mg enzyme with mannose-1-phosphate as substrate</Vmax>
        <Vmax evidence="4">1.4 umol/min/mg enzyme with glucose-1-phosphate as substrate</Vmax>
        <text evidence="4">Glucose-1,6-bisphosphate is essential for activity.</text>
    </kinetics>
    <phDependence>
        <text evidence="4">Optimum pH is 7.5.</text>
    </phDependence>
    <temperatureDependence>
        <text evidence="4">Optimum temperature is 30 degrees Celsius.</text>
    </temperatureDependence>
</comment>
<comment type="pathway">
    <text>Nucleotide-sugar biosynthesis; GDP-alpha-D-mannose biosynthesis; alpha-D-mannose 1-phosphate from D-fructose 6-phosphate: step 2/2.</text>
</comment>
<comment type="subunit">
    <text evidence="3">Homodimer.</text>
</comment>
<comment type="subcellular location">
    <subcellularLocation>
        <location evidence="1">Cytoplasm</location>
    </subcellularLocation>
</comment>
<comment type="tissue specificity">
    <text evidence="4">Expressed in roots, stems, leaves, flowers and immature fruits.</text>
</comment>
<comment type="disruption phenotype">
    <text evidence="5">The thermosensitive lethality of pmm-12 results from glycosylation defects rather than ascorbic acid depletion.</text>
</comment>
<comment type="miscellaneous">
    <text evidence="4">Overexpression of PMM increases total leaf ascorbate content.</text>
</comment>
<comment type="similarity">
    <text evidence="7">Belongs to the eukaryotic PMM family.</text>
</comment>
<organism>
    <name type="scientific">Arabidopsis thaliana</name>
    <name type="common">Mouse-ear cress</name>
    <dbReference type="NCBI Taxonomy" id="3702"/>
    <lineage>
        <taxon>Eukaryota</taxon>
        <taxon>Viridiplantae</taxon>
        <taxon>Streptophyta</taxon>
        <taxon>Embryophyta</taxon>
        <taxon>Tracheophyta</taxon>
        <taxon>Spermatophyta</taxon>
        <taxon>Magnoliopsida</taxon>
        <taxon>eudicotyledons</taxon>
        <taxon>Gunneridae</taxon>
        <taxon>Pentapetalae</taxon>
        <taxon>rosids</taxon>
        <taxon>malvids</taxon>
        <taxon>Brassicales</taxon>
        <taxon>Brassicaceae</taxon>
        <taxon>Camelineae</taxon>
        <taxon>Arabidopsis</taxon>
    </lineage>
</organism>
<feature type="chain" id="PRO_0000199700" description="Phosphomannomutase">
    <location>
        <begin position="1"/>
        <end position="246"/>
    </location>
</feature>
<feature type="active site" description="Nucleophile" evidence="3">
    <location>
        <position position="13"/>
    </location>
</feature>
<feature type="active site" description="Proton donor/acceptor" evidence="3">
    <location>
        <position position="15"/>
    </location>
</feature>
<feature type="binding site" evidence="3">
    <location>
        <position position="13"/>
    </location>
    <ligand>
        <name>Mg(2+)</name>
        <dbReference type="ChEBI" id="CHEBI:18420"/>
        <label>1</label>
    </ligand>
</feature>
<feature type="binding site" evidence="3">
    <location>
        <position position="15"/>
    </location>
    <ligand>
        <name>Mg(2+)</name>
        <dbReference type="ChEBI" id="CHEBI:18420"/>
        <label>1</label>
    </ligand>
</feature>
<feature type="binding site" evidence="3">
    <location>
        <position position="22"/>
    </location>
    <ligand>
        <name>alpha-D-mannose 1-phosphate</name>
        <dbReference type="ChEBI" id="CHEBI:58409"/>
    </ligand>
</feature>
<feature type="binding site" evidence="3">
    <location>
        <position position="124"/>
    </location>
    <ligand>
        <name>alpha-D-mannose 1-phosphate</name>
        <dbReference type="ChEBI" id="CHEBI:58409"/>
    </ligand>
</feature>
<feature type="binding site" evidence="3">
    <location>
        <position position="135"/>
    </location>
    <ligand>
        <name>alpha-D-mannose 1-phosphate</name>
        <dbReference type="ChEBI" id="CHEBI:58409"/>
    </ligand>
</feature>
<feature type="binding site" evidence="3">
    <location>
        <position position="142"/>
    </location>
    <ligand>
        <name>alpha-D-mannose 1-phosphate</name>
        <dbReference type="ChEBI" id="CHEBI:58409"/>
    </ligand>
</feature>
<feature type="binding site" evidence="3">
    <location>
        <position position="180"/>
    </location>
    <ligand>
        <name>alpha-D-mannose 1-phosphate</name>
        <dbReference type="ChEBI" id="CHEBI:58409"/>
    </ligand>
</feature>
<feature type="binding site" evidence="3">
    <location>
        <position position="182"/>
    </location>
    <ligand>
        <name>alpha-D-mannose 1-phosphate</name>
        <dbReference type="ChEBI" id="CHEBI:58409"/>
    </ligand>
</feature>
<feature type="binding site" evidence="2">
    <location>
        <position position="208"/>
    </location>
    <ligand>
        <name>Mg(2+)</name>
        <dbReference type="ChEBI" id="CHEBI:18420"/>
        <label>1</label>
    </ligand>
</feature>
<feature type="binding site" evidence="2">
    <location>
        <position position="220"/>
    </location>
    <ligand>
        <name>Mg(2+)</name>
        <dbReference type="ChEBI" id="CHEBI:18420"/>
        <label>2</label>
    </ligand>
</feature>
<feature type="binding site" evidence="3">
    <location>
        <position position="225"/>
    </location>
    <ligand>
        <name>Mg(2+)</name>
        <dbReference type="ChEBI" id="CHEBI:18420"/>
        <label>2</label>
    </ligand>
</feature>
<feature type="mutagenesis site" description="In pmm-1; 18% reduction of catalytic activity. In pmm-12/dgr1; 92% reduction of catalytic activity resulting in lethality when grown at restrictive temperature; when associated with Q-37." evidence="5">
    <original>G</original>
    <variation>R</variation>
    <location>
        <position position="7"/>
    </location>
</feature>
<feature type="mutagenesis site" description="In pmm-2; 86% reduction of catalytic activity. In pmm-12/dgr1; 92% reduction of catalytic activity resulting in lethality when grown at restrictive temperature; when associated with R-7." evidence="5">
    <original>R</original>
    <variation>Q</variation>
    <location>
        <position position="37"/>
    </location>
</feature>
<keyword id="KW-0963">Cytoplasm</keyword>
<keyword id="KW-0413">Isomerase</keyword>
<keyword id="KW-0460">Magnesium</keyword>
<keyword id="KW-0479">Metal-binding</keyword>
<keyword id="KW-1185">Reference proteome</keyword>
<sequence length="246" mass="27762">MAAKIPGVIALFDVDGTLTAPRKEATPELLDFIRELRKVVTIGVVGGSDLSKISEQLGKTVTNDYDYCFSENGLVAHKDGKSIGIQSLKLHLGDDKLKELINFTLHYIADLDIPIKRGTFIEFRNGMLNVSPIGRNCSQEERDEFERYDKVQNIRPKMVAELRERFAHLNLTFSIGGQISFDVFPKGWDKTYCLQYLEDFSEIHFFGDKTYEGGNDYEIYESPKTIGHSVTSPDDTVAKCKALFMS</sequence>